<accession>Q1PS67</accession>
<accession>A7J3B2</accession>
<accession>H2BIT2</accession>
<accession>H2BIT3</accession>
<accession>H2BIT4</accession>
<accession>H2BIT5</accession>
<accession>H2MFU0</accession>
<proteinExistence type="evidence at protein level"/>
<protein>
    <recommendedName>
        <fullName evidence="10">Telomerase reverse transcriptase</fullName>
        <ecNumber evidence="3 5 8">2.7.7.49</ecNumber>
    </recommendedName>
    <alternativeName>
        <fullName evidence="12">Telomerase catalytic subunit</fullName>
    </alternativeName>
</protein>
<evidence type="ECO:0000250" key="1">
    <source>
        <dbReference type="UniProtKB" id="O14746"/>
    </source>
</evidence>
<evidence type="ECO:0000250" key="2">
    <source>
        <dbReference type="UniProtKB" id="Q4KTA7"/>
    </source>
</evidence>
<evidence type="ECO:0000255" key="3">
    <source>
        <dbReference type="PROSITE-ProRule" id="PRU00405"/>
    </source>
</evidence>
<evidence type="ECO:0000256" key="4">
    <source>
        <dbReference type="SAM" id="MobiDB-lite"/>
    </source>
</evidence>
<evidence type="ECO:0000269" key="5">
    <source>
    </source>
</evidence>
<evidence type="ECO:0000269" key="6">
    <source>
    </source>
</evidence>
<evidence type="ECO:0000269" key="7">
    <source>
    </source>
</evidence>
<evidence type="ECO:0000269" key="8">
    <source>
    </source>
</evidence>
<evidence type="ECO:0000269" key="9">
    <source>
    </source>
</evidence>
<evidence type="ECO:0000303" key="10">
    <source>
    </source>
</evidence>
<evidence type="ECO:0000303" key="11">
    <source>
    </source>
</evidence>
<evidence type="ECO:0000305" key="12"/>
<evidence type="ECO:0000312" key="13">
    <source>
        <dbReference type="EMBL" id="ABB76648.1"/>
    </source>
</evidence>
<evidence type="ECO:0000312" key="14">
    <source>
        <dbReference type="EMBL" id="ABI74619.1"/>
    </source>
</evidence>
<evidence type="ECO:0000312" key="15">
    <source>
        <dbReference type="EMBL" id="ADZ28508.1"/>
    </source>
</evidence>
<evidence type="ECO:0000312" key="16">
    <source>
        <dbReference type="Proteomes" id="UP000001038"/>
    </source>
</evidence>
<evidence type="ECO:0007744" key="17">
    <source>
        <dbReference type="PDB" id="4O26"/>
    </source>
</evidence>
<evidence type="ECO:0007829" key="18">
    <source>
        <dbReference type="PDB" id="4O26"/>
    </source>
</evidence>
<reference evidence="14" key="1">
    <citation type="journal article" date="2008" name="Dev. Growth Differ.">
        <title>Tert expression and telomerase activity in gonads and somatic cells of the Japanese medaka (Oryzias latipes).</title>
        <authorList>
            <person name="Pfennig F."/>
            <person name="Kind B."/>
            <person name="Zieschang F."/>
            <person name="Busch M."/>
            <person name="Gutzeit H.O."/>
        </authorList>
    </citation>
    <scope>NUCLEOTIDE SEQUENCE [MRNA] (ISOFORM F)</scope>
    <scope>TISSUE SPECIFICITY</scope>
    <source>
        <strain evidence="14">D-rR.YHNI</strain>
        <tissue evidence="14">Testis</tissue>
    </source>
</reference>
<reference evidence="15" key="2">
    <citation type="journal article" date="2011" name="Int. J. Biol. Sci.">
        <title>Medaka tert produces multiple variants with differential expression during differentiation in vitro and in vivo.</title>
        <authorList>
            <person name="Rao F."/>
            <person name="Wang T."/>
            <person name="Li M."/>
            <person name="Li Z."/>
            <person name="Hong N."/>
            <person name="Zhao H."/>
            <person name="Yan Y."/>
            <person name="Lu W."/>
            <person name="Chen T."/>
            <person name="Wang W."/>
            <person name="Lim M."/>
            <person name="Yuan Y."/>
            <person name="Liu L."/>
            <person name="Zeng L."/>
            <person name="Wei Q."/>
            <person name="Guan G."/>
            <person name="Li C."/>
            <person name="Hong Y."/>
        </authorList>
    </citation>
    <scope>NUCLEOTIDE SEQUENCE [MRNA] (ISOFORMS A; B; C; D AND E)</scope>
    <scope>TISSUE SPECIFICITY</scope>
    <scope>DEVELOPMENTAL STAGE</scope>
</reference>
<reference evidence="13" key="3">
    <citation type="submission" date="2005-10" db="EMBL/GenBank/DDBJ databases">
        <title>Telomerase reverse transcriptase and telomerase activity in the model fish medaka.</title>
        <authorList>
            <person name="Rao F."/>
            <person name="Li M."/>
            <person name="Hong Y."/>
        </authorList>
    </citation>
    <scope>NUCLEOTIDE SEQUENCE [MRNA]</scope>
    <source>
        <strain evidence="13">Orange</strain>
    </source>
</reference>
<reference evidence="16" key="4">
    <citation type="journal article" date="2007" name="Nature">
        <title>The medaka draft genome and insights into vertebrate genome evolution.</title>
        <authorList>
            <person name="Kasahara M."/>
            <person name="Naruse K."/>
            <person name="Sasaki S."/>
            <person name="Nakatani Y."/>
            <person name="Qu W."/>
            <person name="Ahsan B."/>
            <person name="Yamada T."/>
            <person name="Nagayasu Y."/>
            <person name="Doi K."/>
            <person name="Kasai Y."/>
            <person name="Jindo T."/>
            <person name="Kobayashi D."/>
            <person name="Shimada A."/>
            <person name="Toyoda A."/>
            <person name="Kuroki Y."/>
            <person name="Fujiyama A."/>
            <person name="Sasaki T."/>
            <person name="Shimizu A."/>
            <person name="Asakawa S."/>
            <person name="Shimizu N."/>
            <person name="Hashimoto S."/>
            <person name="Yang J."/>
            <person name="Lee Y."/>
            <person name="Matsushima K."/>
            <person name="Sugano S."/>
            <person name="Sakaizumi M."/>
            <person name="Narita T."/>
            <person name="Ohishi K."/>
            <person name="Haga S."/>
            <person name="Ohta F."/>
            <person name="Nomoto H."/>
            <person name="Nogata K."/>
            <person name="Morishita T."/>
            <person name="Endo T."/>
            <person name="Shin-I T."/>
            <person name="Takeda H."/>
            <person name="Morishita S."/>
            <person name="Kohara Y."/>
        </authorList>
    </citation>
    <scope>NUCLEOTIDE SEQUENCE [LARGE SCALE GENOMIC DNA]</scope>
    <source>
        <strain evidence="16">Hd-rR</strain>
    </source>
</reference>
<reference evidence="12" key="5">
    <citation type="journal article" date="2008" name="J. Biol. Chem.">
        <title>Structure and function of the smallest vertebrate telomerase RNA from teleost fish.</title>
        <authorList>
            <person name="Xie M."/>
            <person name="Mosig A."/>
            <person name="Qi X."/>
            <person name="Li Y."/>
            <person name="Stadler P.F."/>
            <person name="Chen J.J."/>
        </authorList>
    </citation>
    <scope>FUNCTION</scope>
    <scope>CATALYTIC ACTIVITY</scope>
    <scope>SUBUNIT</scope>
    <scope>RECONSTITUTION OF THE TELOMERASE HOLOENZYME COMPLEX</scope>
</reference>
<reference evidence="12" key="6">
    <citation type="journal article" date="2011" name="Proc. Natl. Acad. Sci. U.S.A.">
        <title>RNA-protein binding interface in the telomerase ribonucleoprotein.</title>
        <authorList>
            <person name="Bley C.J."/>
            <person name="Qi X."/>
            <person name="Rand D.P."/>
            <person name="Borges C.R."/>
            <person name="Nelson R.W."/>
            <person name="Chen J.J."/>
        </authorList>
    </citation>
    <scope>FUNCTION</scope>
    <scope>CATALYTIC ACTIVITY</scope>
    <scope>RECONSTITUTION OF THE TELOMERASE HOLOENZYME COMPLEX</scope>
    <scope>SUBUNIT</scope>
    <scope>MUTAGENESIS OF PHE-355; TRP-477 AND TYR-503</scope>
</reference>
<reference evidence="17" key="7">
    <citation type="journal article" date="2014" name="Nat. Struct. Mol. Biol.">
        <title>Structural basis for protein-RNA recognition in telomerase.</title>
        <authorList>
            <person name="Huang J."/>
            <person name="Brown A.F."/>
            <person name="Wu J."/>
            <person name="Xue J."/>
            <person name="Bley C.J."/>
            <person name="Rand D.P."/>
            <person name="Wu L."/>
            <person name="Zhang R."/>
            <person name="Chen J.J."/>
            <person name="Lei M."/>
        </authorList>
    </citation>
    <scope>X-RAY CRYSTALLOGRAPHY (3.00 ANGSTROMS) OF 318-572 IN COMPLEX WITH RNA TEMPLATE</scope>
    <scope>MUTAGENESIS OF PHE-376 AND TYR-503</scope>
</reference>
<organism evidence="13">
    <name type="scientific">Oryzias latipes</name>
    <name type="common">Japanese rice fish</name>
    <name type="synonym">Japanese killifish</name>
    <dbReference type="NCBI Taxonomy" id="8090"/>
    <lineage>
        <taxon>Eukaryota</taxon>
        <taxon>Metazoa</taxon>
        <taxon>Chordata</taxon>
        <taxon>Craniata</taxon>
        <taxon>Vertebrata</taxon>
        <taxon>Euteleostomi</taxon>
        <taxon>Actinopterygii</taxon>
        <taxon>Neopterygii</taxon>
        <taxon>Teleostei</taxon>
        <taxon>Neoteleostei</taxon>
        <taxon>Acanthomorphata</taxon>
        <taxon>Ovalentaria</taxon>
        <taxon>Atherinomorphae</taxon>
        <taxon>Beloniformes</taxon>
        <taxon>Adrianichthyidae</taxon>
        <taxon>Oryziinae</taxon>
        <taxon>Oryzias</taxon>
    </lineage>
</organism>
<dbReference type="EC" id="2.7.7.49" evidence="3 5 8"/>
<dbReference type="EMBL" id="DQ248968">
    <property type="protein sequence ID" value="ABB76648.1"/>
    <property type="molecule type" value="mRNA"/>
</dbReference>
<dbReference type="EMBL" id="DQ870623">
    <property type="protein sequence ID" value="ABI74619.1"/>
    <property type="molecule type" value="mRNA"/>
</dbReference>
<dbReference type="EMBL" id="JF326825">
    <property type="protein sequence ID" value="ADZ28508.1"/>
    <property type="molecule type" value="mRNA"/>
</dbReference>
<dbReference type="EMBL" id="JF326826">
    <property type="protein sequence ID" value="ADZ28509.1"/>
    <property type="molecule type" value="mRNA"/>
</dbReference>
<dbReference type="EMBL" id="JF326827">
    <property type="protein sequence ID" value="ADZ28510.1"/>
    <property type="molecule type" value="mRNA"/>
</dbReference>
<dbReference type="EMBL" id="JF326828">
    <property type="protein sequence ID" value="ADZ28511.1"/>
    <property type="molecule type" value="mRNA"/>
</dbReference>
<dbReference type="RefSeq" id="NP_001098286.1">
    <property type="nucleotide sequence ID" value="NM_001104816.1"/>
</dbReference>
<dbReference type="PDB" id="4O26">
    <property type="method" value="X-ray"/>
    <property type="resolution" value="3.00 A"/>
    <property type="chains" value="A/B=318-572"/>
</dbReference>
<dbReference type="PDBsum" id="4O26"/>
<dbReference type="SMR" id="Q1PS67"/>
<dbReference type="STRING" id="8090.ENSORLP00000017467"/>
<dbReference type="Ensembl" id="ENSORLT00000035913.1">
    <molecule id="Q1PS67-2"/>
    <property type="protein sequence ID" value="ENSORLP00000030497.1"/>
    <property type="gene ID" value="ENSORLG00000013929.2"/>
</dbReference>
<dbReference type="Ensembl" id="ENSORLT00000044664.1">
    <molecule id="Q1PS67-5"/>
    <property type="protein sequence ID" value="ENSORLP00000033801.1"/>
    <property type="gene ID" value="ENSORLG00000013929.2"/>
</dbReference>
<dbReference type="GeneID" id="100049443"/>
<dbReference type="KEGG" id="ola:100049443"/>
<dbReference type="CTD" id="7015"/>
<dbReference type="eggNOG" id="KOG1005">
    <property type="taxonomic scope" value="Eukaryota"/>
</dbReference>
<dbReference type="GeneTree" id="ENSGT00390000018531"/>
<dbReference type="InParanoid" id="Q1PS67"/>
<dbReference type="OrthoDB" id="289721at2759"/>
<dbReference type="TreeFam" id="TF329048"/>
<dbReference type="EvolutionaryTrace" id="Q1PS67"/>
<dbReference type="Proteomes" id="UP000001038">
    <property type="component" value="Chromosome 11"/>
</dbReference>
<dbReference type="Proteomes" id="UP000265180">
    <property type="component" value="Unplaced"/>
</dbReference>
<dbReference type="Proteomes" id="UP000265200">
    <property type="component" value="Unplaced"/>
</dbReference>
<dbReference type="Bgee" id="ENSORLG00000013929">
    <property type="expression patterns" value="Expressed in testis and 9 other cell types or tissues"/>
</dbReference>
<dbReference type="GO" id="GO:0000781">
    <property type="term" value="C:chromosome, telomeric region"/>
    <property type="evidence" value="ECO:0007669"/>
    <property type="project" value="UniProtKB-SubCell"/>
</dbReference>
<dbReference type="GO" id="GO:0000333">
    <property type="term" value="C:telomerase catalytic core complex"/>
    <property type="evidence" value="ECO:0000314"/>
    <property type="project" value="UniProtKB"/>
</dbReference>
<dbReference type="GO" id="GO:0046872">
    <property type="term" value="F:metal ion binding"/>
    <property type="evidence" value="ECO:0007669"/>
    <property type="project" value="UniProtKB-KW"/>
</dbReference>
<dbReference type="GO" id="GO:0003720">
    <property type="term" value="F:telomerase activity"/>
    <property type="evidence" value="ECO:0000314"/>
    <property type="project" value="UniProtKB"/>
</dbReference>
<dbReference type="GO" id="GO:0070034">
    <property type="term" value="F:telomerase RNA binding"/>
    <property type="evidence" value="ECO:0000353"/>
    <property type="project" value="UniProtKB"/>
</dbReference>
<dbReference type="GO" id="GO:0042162">
    <property type="term" value="F:telomeric DNA binding"/>
    <property type="evidence" value="ECO:0000318"/>
    <property type="project" value="GO_Central"/>
</dbReference>
<dbReference type="GO" id="GO:0022616">
    <property type="term" value="P:DNA strand elongation"/>
    <property type="evidence" value="ECO:0000314"/>
    <property type="project" value="UniProtKB"/>
</dbReference>
<dbReference type="GO" id="GO:0007004">
    <property type="term" value="P:telomere maintenance via telomerase"/>
    <property type="evidence" value="ECO:0000250"/>
    <property type="project" value="UniProtKB"/>
</dbReference>
<dbReference type="CDD" id="cd01648">
    <property type="entry name" value="TERT"/>
    <property type="match status" value="1"/>
</dbReference>
<dbReference type="FunFam" id="1.10.132.70:FF:000002">
    <property type="entry name" value="Telomerase reverse transcriptase"/>
    <property type="match status" value="1"/>
</dbReference>
<dbReference type="FunFam" id="1.10.357.90:FF:000001">
    <property type="entry name" value="Telomerase reverse transcriptase"/>
    <property type="match status" value="1"/>
</dbReference>
<dbReference type="Gene3D" id="1.10.132.70">
    <property type="match status" value="1"/>
</dbReference>
<dbReference type="Gene3D" id="1.10.357.90">
    <property type="match status" value="1"/>
</dbReference>
<dbReference type="Gene3D" id="3.30.70.2630">
    <property type="match status" value="1"/>
</dbReference>
<dbReference type="IDEAL" id="IID50328"/>
<dbReference type="InterPro" id="IPR043502">
    <property type="entry name" value="DNA/RNA_pol_sf"/>
</dbReference>
<dbReference type="InterPro" id="IPR000477">
    <property type="entry name" value="RT_dom"/>
</dbReference>
<dbReference type="InterPro" id="IPR021891">
    <property type="entry name" value="Telomerase_RBD"/>
</dbReference>
<dbReference type="InterPro" id="IPR003545">
    <property type="entry name" value="Telomerase_RT"/>
</dbReference>
<dbReference type="InterPro" id="IPR049139">
    <property type="entry name" value="TERT_C"/>
</dbReference>
<dbReference type="PANTHER" id="PTHR12066">
    <property type="entry name" value="TELOMERASE REVERSE TRANSCRIPTASE"/>
    <property type="match status" value="1"/>
</dbReference>
<dbReference type="PANTHER" id="PTHR12066:SF0">
    <property type="entry name" value="TELOMERASE REVERSE TRANSCRIPTASE"/>
    <property type="match status" value="1"/>
</dbReference>
<dbReference type="Pfam" id="PF00078">
    <property type="entry name" value="RVT_1"/>
    <property type="match status" value="1"/>
</dbReference>
<dbReference type="Pfam" id="PF12009">
    <property type="entry name" value="Telomerase_RBD"/>
    <property type="match status" value="1"/>
</dbReference>
<dbReference type="Pfam" id="PF21399">
    <property type="entry name" value="TERT_C"/>
    <property type="match status" value="1"/>
</dbReference>
<dbReference type="PRINTS" id="PR01365">
    <property type="entry name" value="TELOMERASERT"/>
</dbReference>
<dbReference type="SMART" id="SM00975">
    <property type="entry name" value="Telomerase_RBD"/>
    <property type="match status" value="1"/>
</dbReference>
<dbReference type="SUPFAM" id="SSF56672">
    <property type="entry name" value="DNA/RNA polymerases"/>
    <property type="match status" value="1"/>
</dbReference>
<dbReference type="PROSITE" id="PS50878">
    <property type="entry name" value="RT_POL"/>
    <property type="match status" value="1"/>
</dbReference>
<comment type="function">
    <text evidence="5 8">Telomerase is a ribonucleoprotein enzyme essential for the replication of chromosome termini in most eukaryotes. It elongates telomeres. It is a reverse transcriptase that adds simple sequence repeats to chromosome ends by copying a template sequence within the RNA component of the enzyme.</text>
</comment>
<comment type="catalytic activity">
    <reaction evidence="3 5 8">
        <text>DNA(n) + a 2'-deoxyribonucleoside 5'-triphosphate = DNA(n+1) + diphosphate</text>
        <dbReference type="Rhea" id="RHEA:22508"/>
        <dbReference type="Rhea" id="RHEA-COMP:17339"/>
        <dbReference type="Rhea" id="RHEA-COMP:17340"/>
        <dbReference type="ChEBI" id="CHEBI:33019"/>
        <dbReference type="ChEBI" id="CHEBI:61560"/>
        <dbReference type="ChEBI" id="CHEBI:173112"/>
        <dbReference type="EC" id="2.7.7.49"/>
    </reaction>
</comment>
<comment type="subunit">
    <text evidence="5 8">Catalytic subunit of the telomerase holoenzyme complex composed minimally of TERT and the telomerase RNA template component (TERC).</text>
</comment>
<comment type="subcellular location">
    <subcellularLocation>
        <location evidence="1">Nucleus</location>
    </subcellularLocation>
    <subcellularLocation>
        <location evidence="1">Chromosome</location>
        <location evidence="1">Telomere</location>
    </subcellularLocation>
</comment>
<comment type="alternative products">
    <event type="alternative splicing"/>
    <isoform>
        <id>Q1PS67-1</id>
        <name evidence="11">A</name>
        <name evidence="10">Long</name>
        <sequence type="displayed"/>
    </isoform>
    <isoform>
        <id>Q1PS67-2</id>
        <name evidence="11">B</name>
        <sequence type="described" ref="VSP_057764 VSP_057765"/>
    </isoform>
    <isoform>
        <id>Q1PS67-3</id>
        <name evidence="11">C</name>
        <sequence type="described" ref="VSP_057767 VSP_057768"/>
    </isoform>
    <isoform>
        <id>Q1PS67-4</id>
        <name evidence="11">D</name>
        <sequence type="described" ref="VSP_057769 VSP_057771"/>
    </isoform>
    <isoform>
        <id>Q1PS67-5</id>
        <name evidence="11">E</name>
        <sequence type="described" ref="VSP_057766 VSP_057770"/>
    </isoform>
    <isoform>
        <id>Q1PS67-6</id>
        <name evidence="12">F</name>
        <name evidence="10">Short</name>
        <sequence type="described" ref="VSP_057772 VSP_057773"/>
    </isoform>
</comment>
<comment type="tissue specificity">
    <text evidence="6 7">Expressed at highest levels in gonads and brain, and at lower levels in heart, spleen, kidney, gill, muscle and skin (PubMed:18312429, PubMed:21547060). Detected in embryonic stem cell lines before and after differentiation (PubMed:21547060). Isoform F is expressed in gonads, with higher levels in testis relative to ovary, but is not detected in other tissues (PubMed:18312429). Isoform B is expressed predominantly in testis (PubMed:21547060). Isoform C is up-regulated in embryonic stem cell lines after differentiation (PubMed:21547060).</text>
</comment>
<comment type="developmental stage">
    <text evidence="7">Expressed at high levels from the embryonic 2-cell stage through to the blastula stage, possibly due to inheritance of maternal transcripts. During later stages levels gradually decline.</text>
</comment>
<comment type="similarity">
    <text evidence="12">Belongs to the reverse transcriptase family. Telomerase subfamily.</text>
</comment>
<sequence>MTSGDLSSVLNILRSLYKRTRTLEEFADGVVFREGRRAALLQPSDTHSFKSFVRGVFVCSDEELQDVPSCNQTCTFPELLAFILNSLKRKRRRNVLAHGYNFLGVAQEDRDADHFRFQGDLSQSAAYIHSSDLWKKVTARLGTDVTRYLLGSCSVFVLAPPSCVFQICGVPAYDRVSMTTASSGFLLRPPSRKHKSFQVGKKTRSANLTKTGSVGDVEESRKRRRVESEVSTRKRKRESEEEESRERRRGVHHEERRQHEAVLDESTLSGKSGENDAAAVKPPPETSAAPPPLEGGPSWRSGAFPPLPSSQCFIRTLGFLYGGRGMHGFCLNRKRRTAAGPRRLQGQDLVRLVFFEGLPYLNGQERKPKKLPLRYFNMVPVFGRLLQRHRKCRYSSVLHRMCPVVELSRAAQGELSSLIPQHCAPHRVYLFVRECLTAVVPEELWGSDHNRLQFFSRVRGFLKSGKFERISVAELMWKIKVMDCDWLKLRRTAGRFPPSELAYRTRILSQFLTWLLDGFVVGLVRACFYATESVGQKNAIRFYRQEVWSKLQDLAFRRHIAKGEMEELSPAQVASLPKGTVISQLRFIPKTDGMRPITRVIGADSNTRLHHKRIRDLMSMLQARVRSAPALLGSTVWGMTDIHKVLRSLAPAQKDKPQPLYFVKVDVSGAYDSLPHDKLKEVITEALSPVQEEVFTVRHYAKIWADSHEGLKKAFARQVDFSDGSMGSTSMKGFVMSLQKSSKVHHAVLVEQAFGSNLRGKDALQFFTQMLTGSVVQHGKKTYRQCRGIPQGSVVSSLLCCLCYGHMENVLFRDIKNKGWLMRLVDDFLLITPDRNQAQSFLSILLAGVPQYGVVANPQKVVVNFQGSEGGGAFPDIRVLPPHCLFPWCGLLLDTRSLDVCKDYSSYAGLSLRYSLTLGSAHSAGQQMRRKLMSILRIKCHPLFLDLKTNSLESAYKNIHKLVLLQACRFHVCVQSLPFAQTVAKNPTYFQQMIWDMAHYANALIRRSNTGLVLGDGAQKGSVQYEAVELLFCLAFLRVLSKHRPVYKDLLPRLHKWKRRLERLLGDLRLARVRQAANPRALLDFLAMQM</sequence>
<name>TERT_ORYLA</name>
<keyword id="KW-0002">3D-structure</keyword>
<keyword id="KW-0025">Alternative splicing</keyword>
<keyword id="KW-0158">Chromosome</keyword>
<keyword id="KW-0460">Magnesium</keyword>
<keyword id="KW-0479">Metal-binding</keyword>
<keyword id="KW-0548">Nucleotidyltransferase</keyword>
<keyword id="KW-0539">Nucleus</keyword>
<keyword id="KW-1185">Reference proteome</keyword>
<keyword id="KW-0687">Ribonucleoprotein</keyword>
<keyword id="KW-0694">RNA-binding</keyword>
<keyword id="KW-0695">RNA-directed DNA polymerase</keyword>
<keyword id="KW-0779">Telomere</keyword>
<keyword id="KW-0808">Transferase</keyword>
<feature type="chain" id="PRO_0000433391" description="Telomerase reverse transcriptase" evidence="12">
    <location>
        <begin position="1"/>
        <end position="1090"/>
    </location>
</feature>
<feature type="domain" description="Reverse transcriptase" evidence="3">
    <location>
        <begin position="569"/>
        <end position="893"/>
    </location>
</feature>
<feature type="region of interest" description="Disordered" evidence="4">
    <location>
        <begin position="184"/>
        <end position="301"/>
    </location>
</feature>
<feature type="region of interest" description="Interaction with RNA template" evidence="9">
    <location>
        <begin position="371"/>
        <end position="376"/>
    </location>
</feature>
<feature type="region of interest" description="Interaction with RNA template" evidence="9">
    <location>
        <begin position="477"/>
        <end position="503"/>
    </location>
</feature>
<feature type="short sequence motif" description="TFLY; involved in RNA binding" evidence="2">
    <location>
        <begin position="316"/>
        <end position="321"/>
    </location>
</feature>
<feature type="compositionally biased region" description="Basic residues" evidence="4">
    <location>
        <begin position="190"/>
        <end position="204"/>
    </location>
</feature>
<feature type="compositionally biased region" description="Basic and acidic residues" evidence="4">
    <location>
        <begin position="218"/>
        <end position="232"/>
    </location>
</feature>
<feature type="compositionally biased region" description="Basic and acidic residues" evidence="4">
    <location>
        <begin position="252"/>
        <end position="262"/>
    </location>
</feature>
<feature type="compositionally biased region" description="Pro residues" evidence="4">
    <location>
        <begin position="281"/>
        <end position="294"/>
    </location>
</feature>
<feature type="binding site" evidence="3">
    <location>
        <position position="666"/>
    </location>
    <ligand>
        <name>Mg(2+)</name>
        <dbReference type="ChEBI" id="CHEBI:18420"/>
        <note>catalytic</note>
    </ligand>
</feature>
<feature type="binding site" evidence="3">
    <location>
        <position position="826"/>
    </location>
    <ligand>
        <name>Mg(2+)</name>
        <dbReference type="ChEBI" id="CHEBI:18420"/>
        <note>catalytic</note>
    </ligand>
</feature>
<feature type="binding site" evidence="3">
    <location>
        <position position="827"/>
    </location>
    <ligand>
        <name>Mg(2+)</name>
        <dbReference type="ChEBI" id="CHEBI:18420"/>
        <note>catalytic</note>
    </ligand>
</feature>
<feature type="splice variant" id="VSP_057764" description="In isoform B.">
    <original>TCTFPELLAFILNSLKRKRRRNVLAHGYNFLGVAQEDRDADHFRFQGDLSQSAAYIHSSDLWKKVTARLGTDVTRYLLGSCSVFVLAPPSCVFQICGVPAYDRVSMTTASSGFLLRPPSRKHKSFQVGKKTRSANLTKTGSVGDVEESRKRRRVESEVSTRKRKRESEEEESRERRRGVHHEERRQHEAVLDESTLSGKSGENDAAAVKPPPETSAAPPPLEGGPSWRSGAFPPLPSSQCFIRTLGFLYGGRGMHGFCLNRKRRTAAGPRRLQGQDLVRLVFFEGLPYLNGQERKPKKLPLRYFNMVPVFGRLLQRHRKCRYSSVLHRMCPVVELSRAAQGELSSLIPQHCAPHRVYLFVRECLTAVVPEEL</original>
    <variation>VDFSDGSMGSTSMKGFVMSLQKSSKVHHAVLVEQAFGSNLRGKDALQFFTQMLTGSVVQHGKKTYRQCRGIPQGSVVSSLLCCLCYGHMENVLFRDIKNKGCLMRLVDDFLLITPDRNQAQSFLSILLAGVPQYGVVANPQKVVVNFQGSEGGGAFPDIRVLPPHCLFPWCGLLLDTRSLDVCKDYSSYAGLSLRYSLTLGSAHSAGQQMRRKLMSILRIKCHPLFLDLKTNSLESAYKNIHKLVLLQACRFHVCVQSLPFAQTVAKNPTYFQQMIWDMAHYANALIRRSNTGLVLGDGAQKGSVQYEAVELLFCLAFLRVLSKHRPVYKDLLPRLHKWKRRLERLLGDLRLARVRQAANPRALLDFLAMQM</variation>
    <location>
        <begin position="73"/>
        <end position="444"/>
    </location>
</feature>
<feature type="splice variant" id="VSP_057765" description="In isoform B.">
    <location>
        <begin position="445"/>
        <end position="1090"/>
    </location>
</feature>
<feature type="splice variant" id="VSP_057766" description="In isoform E.">
    <original>LHHKRIRDLMSMLQARVRSAPALLGSTVWGMTDIHKVLRSLAPAQKDKPQPLYFVKVD</original>
    <variation>EHPMFSFLHPSLTGSPVGWAEGGCERRLRQSAARQTQGGDHRGFVTRPRGSLHRPPLR</variation>
    <location>
        <begin position="609"/>
        <end position="666"/>
    </location>
</feature>
<feature type="splice variant" id="VSP_057767" description="In isoform C.">
    <original>LHHKRIRDLMS</original>
    <variation>VHTDEISSVLS</variation>
    <location>
        <begin position="609"/>
        <end position="619"/>
    </location>
</feature>
<feature type="splice variant" id="VSP_057768" description="In isoform C.">
    <location>
        <begin position="620"/>
        <end position="1090"/>
    </location>
</feature>
<feature type="splice variant" id="VSP_057769" description="In isoform D.">
    <original>DVSGAYDSLPHDKLKEVITEALSPV</original>
    <variation>NLVLPGTSDVFLSPPVSDGLTCGLG</variation>
    <location>
        <begin position="666"/>
        <end position="690"/>
    </location>
</feature>
<feature type="splice variant" id="VSP_057770" description="In isoform E.">
    <location>
        <begin position="667"/>
        <end position="1090"/>
    </location>
</feature>
<feature type="splice variant" id="VSP_057771" description="In isoform D.">
    <location>
        <begin position="691"/>
        <end position="1090"/>
    </location>
</feature>
<feature type="splice variant" id="VSP_057772" description="In isoform F.">
    <original>WKRRLER</original>
    <variation>CGCSTKH</variation>
    <location>
        <begin position="1057"/>
        <end position="1063"/>
    </location>
</feature>
<feature type="splice variant" id="VSP_057773" description="In isoform F.">
    <location>
        <begin position="1064"/>
        <end position="1090"/>
    </location>
</feature>
<feature type="mutagenesis site" description="Mildly impaired RNA template binding." evidence="8">
    <original>F</original>
    <variation>L</variation>
    <location>
        <position position="355"/>
    </location>
</feature>
<feature type="mutagenesis site" description="Impaired RNA template binding." evidence="8">
    <original>F</original>
    <variation>Y</variation>
    <location>
        <position position="355"/>
    </location>
</feature>
<feature type="mutagenesis site" description="Impaired RNA template binding." evidence="9">
    <original>F</original>
    <variation>A</variation>
    <location>
        <position position="376"/>
    </location>
</feature>
<feature type="mutagenesis site" description="No effect on RNA template binding." evidence="8">
    <original>W</original>
    <variation>F</variation>
    <location>
        <position position="477"/>
    </location>
</feature>
<feature type="mutagenesis site" description="Impaired RNA template binding." evidence="8">
    <original>W</original>
    <variation>L</variation>
    <location>
        <position position="477"/>
    </location>
</feature>
<feature type="mutagenesis site" description="Impaired RNA template binding." evidence="9">
    <original>Y</original>
    <variation>A</variation>
    <location>
        <position position="503"/>
    </location>
</feature>
<feature type="mutagenesis site" description="No effect on RNA template binding." evidence="8">
    <original>Y</original>
    <variation>F</variation>
    <location>
        <position position="503"/>
    </location>
</feature>
<feature type="mutagenesis site" description="Impaired RNA template binding." evidence="8">
    <original>Y</original>
    <variation>S</variation>
    <location>
        <position position="503"/>
    </location>
</feature>
<feature type="sequence conflict" description="In Ref. 1; ABB76648 and 3; ADZ28508/ADZ28509/ADZ28510/ADZ28511." ref="1 3">
    <original>V</original>
    <variation>I</variation>
    <location>
        <position position="164"/>
    </location>
</feature>
<feature type="sequence conflict" description="In Ref. 1; ABB76648 and 3; ADZ28508/ADZ28509/ADZ28510/ADZ28511." ref="1 3">
    <original>T</original>
    <variation>R</variation>
    <location>
        <position position="203"/>
    </location>
</feature>
<feature type="sequence conflict" description="In Ref. 1; ABB76648 and 3; ADZ28508/ADZ28509/ADZ28511." ref="1 3">
    <original>T</original>
    <variation>R</variation>
    <location>
        <position position="211"/>
    </location>
</feature>
<feature type="sequence conflict" description="In Ref. 1; ABB76648 and 3; ADZ28508/ADZ28509/ADZ28511." ref="1 3">
    <original>E</original>
    <variation>G</variation>
    <location>
        <position position="229"/>
    </location>
</feature>
<feature type="sequence conflict" description="In Ref. 1; ABB76648 and 3; ADZ28508/ADZ28509/ADZ28511." ref="1 3">
    <original>T</original>
    <variation>A</variation>
    <location>
        <position position="232"/>
    </location>
</feature>
<feature type="sequence conflict" description="In Ref. 1; ABB76648 and 3; ADZ28508/ADZ28509/ADZ28511." ref="1 3">
    <original>S</original>
    <variation>P</variation>
    <location>
        <position position="239"/>
    </location>
</feature>
<feature type="sequence conflict" description="In Ref. 1; ABB76648." ref="1">
    <original>W</original>
    <variation>C</variation>
    <location>
        <position position="820"/>
    </location>
</feature>
<feature type="helix" evidence="18">
    <location>
        <begin position="326"/>
        <end position="328"/>
    </location>
</feature>
<feature type="helix" evidence="18">
    <location>
        <begin position="330"/>
        <end position="332"/>
    </location>
</feature>
<feature type="helix" evidence="18">
    <location>
        <begin position="346"/>
        <end position="354"/>
    </location>
</feature>
<feature type="helix" evidence="18">
    <location>
        <begin position="373"/>
        <end position="376"/>
    </location>
</feature>
<feature type="helix" evidence="18">
    <location>
        <begin position="379"/>
        <end position="391"/>
    </location>
</feature>
<feature type="helix" evidence="18">
    <location>
        <begin position="394"/>
        <end position="401"/>
    </location>
</feature>
<feature type="turn" evidence="18">
    <location>
        <begin position="409"/>
        <end position="414"/>
    </location>
</feature>
<feature type="helix" evidence="18">
    <location>
        <begin position="415"/>
        <end position="417"/>
    </location>
</feature>
<feature type="helix" evidence="18">
    <location>
        <begin position="425"/>
        <end position="439"/>
    </location>
</feature>
<feature type="helix" evidence="18">
    <location>
        <begin position="442"/>
        <end position="445"/>
    </location>
</feature>
<feature type="helix" evidence="18">
    <location>
        <begin position="448"/>
        <end position="461"/>
    </location>
</feature>
<feature type="strand" evidence="18">
    <location>
        <begin position="468"/>
        <end position="470"/>
    </location>
</feature>
<feature type="turn" evidence="18">
    <location>
        <begin position="473"/>
        <end position="475"/>
    </location>
</feature>
<feature type="helix" evidence="18">
    <location>
        <begin position="481"/>
        <end position="483"/>
    </location>
</feature>
<feature type="helix" evidence="18">
    <location>
        <begin position="485"/>
        <end position="487"/>
    </location>
</feature>
<feature type="strand" evidence="18">
    <location>
        <begin position="489"/>
        <end position="491"/>
    </location>
</feature>
<feature type="helix" evidence="18">
    <location>
        <begin position="498"/>
        <end position="517"/>
    </location>
</feature>
<feature type="helix" evidence="18">
    <location>
        <begin position="519"/>
        <end position="527"/>
    </location>
</feature>
<feature type="strand" evidence="18">
    <location>
        <begin position="529"/>
        <end position="532"/>
    </location>
</feature>
<feature type="strand" evidence="18">
    <location>
        <begin position="535"/>
        <end position="537"/>
    </location>
</feature>
<feature type="strand" evidence="18">
    <location>
        <begin position="540"/>
        <end position="543"/>
    </location>
</feature>
<feature type="helix" evidence="18">
    <location>
        <begin position="546"/>
        <end position="568"/>
    </location>
</feature>
<gene>
    <name evidence="10" type="primary">tert</name>
</gene>